<dbReference type="EC" id="2.5.1.16" evidence="1"/>
<dbReference type="EMBL" id="AE017126">
    <property type="protein sequence ID" value="AAQ00892.1"/>
    <property type="molecule type" value="Genomic_DNA"/>
</dbReference>
<dbReference type="RefSeq" id="NP_876239.1">
    <property type="nucleotide sequence ID" value="NC_005042.1"/>
</dbReference>
<dbReference type="RefSeq" id="WP_011125997.1">
    <property type="nucleotide sequence ID" value="NC_005042.1"/>
</dbReference>
<dbReference type="SMR" id="Q7V9I5"/>
<dbReference type="STRING" id="167539.Pro_1848"/>
<dbReference type="EnsemblBacteria" id="AAQ00892">
    <property type="protein sequence ID" value="AAQ00892"/>
    <property type="gene ID" value="Pro_1848"/>
</dbReference>
<dbReference type="KEGG" id="pma:Pro_1848"/>
<dbReference type="PATRIC" id="fig|167539.5.peg.1950"/>
<dbReference type="eggNOG" id="COG0421">
    <property type="taxonomic scope" value="Bacteria"/>
</dbReference>
<dbReference type="HOGENOM" id="CLU_048199_0_0_3"/>
<dbReference type="OrthoDB" id="9793120at2"/>
<dbReference type="UniPathway" id="UPA00248">
    <property type="reaction ID" value="UER00314"/>
</dbReference>
<dbReference type="Proteomes" id="UP000001420">
    <property type="component" value="Chromosome"/>
</dbReference>
<dbReference type="GO" id="GO:0005737">
    <property type="term" value="C:cytoplasm"/>
    <property type="evidence" value="ECO:0007669"/>
    <property type="project" value="UniProtKB-SubCell"/>
</dbReference>
<dbReference type="GO" id="GO:0004766">
    <property type="term" value="F:spermidine synthase activity"/>
    <property type="evidence" value="ECO:0007669"/>
    <property type="project" value="UniProtKB-UniRule"/>
</dbReference>
<dbReference type="GO" id="GO:0008295">
    <property type="term" value="P:spermidine biosynthetic process"/>
    <property type="evidence" value="ECO:0007669"/>
    <property type="project" value="UniProtKB-UniRule"/>
</dbReference>
<dbReference type="CDD" id="cd02440">
    <property type="entry name" value="AdoMet_MTases"/>
    <property type="match status" value="1"/>
</dbReference>
<dbReference type="Gene3D" id="2.30.140.10">
    <property type="entry name" value="Spermidine synthase, tetramerisation domain"/>
    <property type="match status" value="1"/>
</dbReference>
<dbReference type="Gene3D" id="3.40.50.150">
    <property type="entry name" value="Vaccinia Virus protein VP39"/>
    <property type="match status" value="1"/>
</dbReference>
<dbReference type="HAMAP" id="MF_00198">
    <property type="entry name" value="Spermidine_synth"/>
    <property type="match status" value="1"/>
</dbReference>
<dbReference type="InterPro" id="IPR030374">
    <property type="entry name" value="PABS"/>
</dbReference>
<dbReference type="InterPro" id="IPR030373">
    <property type="entry name" value="PABS_CS"/>
</dbReference>
<dbReference type="InterPro" id="IPR029063">
    <property type="entry name" value="SAM-dependent_MTases_sf"/>
</dbReference>
<dbReference type="InterPro" id="IPR001045">
    <property type="entry name" value="Spermi_synthase"/>
</dbReference>
<dbReference type="InterPro" id="IPR035246">
    <property type="entry name" value="Spermidine_synt_N"/>
</dbReference>
<dbReference type="InterPro" id="IPR037163">
    <property type="entry name" value="Spermidine_synt_N_sf"/>
</dbReference>
<dbReference type="NCBIfam" id="NF002010">
    <property type="entry name" value="PRK00811.1"/>
    <property type="match status" value="1"/>
</dbReference>
<dbReference type="PANTHER" id="PTHR11558:SF11">
    <property type="entry name" value="SPERMIDINE SYNTHASE"/>
    <property type="match status" value="1"/>
</dbReference>
<dbReference type="PANTHER" id="PTHR11558">
    <property type="entry name" value="SPERMIDINE/SPERMINE SYNTHASE"/>
    <property type="match status" value="1"/>
</dbReference>
<dbReference type="Pfam" id="PF17284">
    <property type="entry name" value="Spermine_synt_N"/>
    <property type="match status" value="1"/>
</dbReference>
<dbReference type="Pfam" id="PF01564">
    <property type="entry name" value="Spermine_synth"/>
    <property type="match status" value="1"/>
</dbReference>
<dbReference type="SUPFAM" id="SSF53335">
    <property type="entry name" value="S-adenosyl-L-methionine-dependent methyltransferases"/>
    <property type="match status" value="1"/>
</dbReference>
<dbReference type="PROSITE" id="PS01330">
    <property type="entry name" value="PABS_1"/>
    <property type="match status" value="1"/>
</dbReference>
<dbReference type="PROSITE" id="PS51006">
    <property type="entry name" value="PABS_2"/>
    <property type="match status" value="1"/>
</dbReference>
<protein>
    <recommendedName>
        <fullName evidence="1">Polyamine aminopropyltransferase</fullName>
    </recommendedName>
    <alternativeName>
        <fullName evidence="1">Putrescine aminopropyltransferase</fullName>
        <shortName evidence="1">PAPT</shortName>
    </alternativeName>
    <alternativeName>
        <fullName evidence="1">Spermidine synthase</fullName>
        <shortName evidence="1">SPDS</shortName>
        <shortName evidence="1">SPDSY</shortName>
        <ecNumber evidence="1">2.5.1.16</ecNumber>
    </alternativeName>
</protein>
<reference key="1">
    <citation type="journal article" date="2003" name="Proc. Natl. Acad. Sci. U.S.A.">
        <title>Genome sequence of the cyanobacterium Prochlorococcus marinus SS120, a nearly minimal oxyphototrophic genome.</title>
        <authorList>
            <person name="Dufresne A."/>
            <person name="Salanoubat M."/>
            <person name="Partensky F."/>
            <person name="Artiguenave F."/>
            <person name="Axmann I.M."/>
            <person name="Barbe V."/>
            <person name="Duprat S."/>
            <person name="Galperin M.Y."/>
            <person name="Koonin E.V."/>
            <person name="Le Gall F."/>
            <person name="Makarova K.S."/>
            <person name="Ostrowski M."/>
            <person name="Oztas S."/>
            <person name="Robert C."/>
            <person name="Rogozin I.B."/>
            <person name="Scanlan D.J."/>
            <person name="Tandeau de Marsac N."/>
            <person name="Weissenbach J."/>
            <person name="Wincker P."/>
            <person name="Wolf Y.I."/>
            <person name="Hess W.R."/>
        </authorList>
    </citation>
    <scope>NUCLEOTIDE SEQUENCE [LARGE SCALE GENOMIC DNA]</scope>
    <source>
        <strain>SARG / CCMP1375 / SS120</strain>
    </source>
</reference>
<comment type="function">
    <text evidence="1">Catalyzes the irreversible transfer of a propylamine group from the amino donor S-adenosylmethioninamine (decarboxy-AdoMet) to putrescine (1,4-diaminobutane) to yield spermidine.</text>
</comment>
<comment type="catalytic activity">
    <reaction evidence="1">
        <text>S-adenosyl 3-(methylsulfanyl)propylamine + putrescine = S-methyl-5'-thioadenosine + spermidine + H(+)</text>
        <dbReference type="Rhea" id="RHEA:12721"/>
        <dbReference type="ChEBI" id="CHEBI:15378"/>
        <dbReference type="ChEBI" id="CHEBI:17509"/>
        <dbReference type="ChEBI" id="CHEBI:57443"/>
        <dbReference type="ChEBI" id="CHEBI:57834"/>
        <dbReference type="ChEBI" id="CHEBI:326268"/>
        <dbReference type="EC" id="2.5.1.16"/>
    </reaction>
</comment>
<comment type="pathway">
    <text evidence="1">Amine and polyamine biosynthesis; spermidine biosynthesis; spermidine from putrescine: step 1/1.</text>
</comment>
<comment type="subunit">
    <text evidence="1">Homodimer or homotetramer.</text>
</comment>
<comment type="subcellular location">
    <subcellularLocation>
        <location evidence="1">Cytoplasm</location>
    </subcellularLocation>
</comment>
<comment type="similarity">
    <text evidence="1">Belongs to the spermidine/spermine synthase family.</text>
</comment>
<keyword id="KW-0963">Cytoplasm</keyword>
<keyword id="KW-0620">Polyamine biosynthesis</keyword>
<keyword id="KW-1185">Reference proteome</keyword>
<keyword id="KW-0745">Spermidine biosynthesis</keyword>
<keyword id="KW-0808">Transferase</keyword>
<proteinExistence type="inferred from homology"/>
<evidence type="ECO:0000255" key="1">
    <source>
        <dbReference type="HAMAP-Rule" id="MF_00198"/>
    </source>
</evidence>
<gene>
    <name evidence="1" type="primary">speE</name>
    <name type="ordered locus">Pro_1848</name>
</gene>
<sequence length="287" mass="32932">MFENENPNGSWLDEYQNDVRYGLKGKKIIEEISNFQKITIFESNRYGKALLLDNCWMTAEYQEKQYHECIVHPALCGSKEINKVLIIGGGDGGSARECLKYQELKNLDLIEIDKRVVELSQQYLSVIGGNCWKDQRLNLKLTNGINWVKDAKDNSYDVIIIDGSDPKGPAKGLFNKDFFKDCHRILKPDGVLGAQTESPESFEDIHINTVKMIKEVFKYADPLYGYVPIYPSGIWSWTFASIKKPRHLYPIISRANTISKTCQVWSPRWQRGGFDAIPANIERKLQQ</sequence>
<feature type="chain" id="PRO_0000156494" description="Polyamine aminopropyltransferase">
    <location>
        <begin position="1"/>
        <end position="287"/>
    </location>
</feature>
<feature type="domain" description="PABS" evidence="1">
    <location>
        <begin position="9"/>
        <end position="242"/>
    </location>
</feature>
<feature type="active site" description="Proton acceptor" evidence="1">
    <location>
        <position position="162"/>
    </location>
</feature>
<feature type="binding site" evidence="1">
    <location>
        <position position="36"/>
    </location>
    <ligand>
        <name>S-methyl-5'-thioadenosine</name>
        <dbReference type="ChEBI" id="CHEBI:17509"/>
    </ligand>
</feature>
<feature type="binding site" evidence="1">
    <location>
        <position position="67"/>
    </location>
    <ligand>
        <name>spermidine</name>
        <dbReference type="ChEBI" id="CHEBI:57834"/>
    </ligand>
</feature>
<feature type="binding site" evidence="1">
    <location>
        <position position="91"/>
    </location>
    <ligand>
        <name>spermidine</name>
        <dbReference type="ChEBI" id="CHEBI:57834"/>
    </ligand>
</feature>
<feature type="binding site" evidence="1">
    <location>
        <position position="111"/>
    </location>
    <ligand>
        <name>S-methyl-5'-thioadenosine</name>
        <dbReference type="ChEBI" id="CHEBI:17509"/>
    </ligand>
</feature>
<feature type="binding site" evidence="1">
    <location>
        <begin position="143"/>
        <end position="144"/>
    </location>
    <ligand>
        <name>S-methyl-5'-thioadenosine</name>
        <dbReference type="ChEBI" id="CHEBI:17509"/>
    </ligand>
</feature>
<feature type="binding site" evidence="1">
    <location>
        <position position="169"/>
    </location>
    <ligand>
        <name>S-methyl-5'-thioadenosine</name>
        <dbReference type="ChEBI" id="CHEBI:17509"/>
    </ligand>
</feature>
<organism>
    <name type="scientific">Prochlorococcus marinus (strain SARG / CCMP1375 / SS120)</name>
    <dbReference type="NCBI Taxonomy" id="167539"/>
    <lineage>
        <taxon>Bacteria</taxon>
        <taxon>Bacillati</taxon>
        <taxon>Cyanobacteriota</taxon>
        <taxon>Cyanophyceae</taxon>
        <taxon>Synechococcales</taxon>
        <taxon>Prochlorococcaceae</taxon>
        <taxon>Prochlorococcus</taxon>
    </lineage>
</organism>
<accession>Q7V9I5</accession>
<name>SPEE_PROMA</name>